<keyword id="KW-0249">Electron transport</keyword>
<keyword id="KW-0472">Membrane</keyword>
<keyword id="KW-0496">Mitochondrion</keyword>
<keyword id="KW-0999">Mitochondrion inner membrane</keyword>
<keyword id="KW-0520">NAD</keyword>
<keyword id="KW-0679">Respiratory chain</keyword>
<keyword id="KW-1278">Translocase</keyword>
<keyword id="KW-0812">Transmembrane</keyword>
<keyword id="KW-1133">Transmembrane helix</keyword>
<keyword id="KW-0813">Transport</keyword>
<keyword id="KW-0830">Ubiquinone</keyword>
<gene>
    <name type="primary">ND1</name>
    <name type="synonym">NAD1</name>
</gene>
<protein>
    <recommendedName>
        <fullName>NADH-ubiquinone oxidoreductase chain 1</fullName>
        <ecNumber>7.1.1.2</ecNumber>
    </recommendedName>
    <alternativeName>
        <fullName>NADH dehydrogenase subunit 1</fullName>
    </alternativeName>
</protein>
<accession>P48898</accession>
<proteinExistence type="inferred from homology"/>
<organism>
    <name type="scientific">Chondrus crispus</name>
    <name type="common">Carrageen Irish moss</name>
    <name type="synonym">Polymorpha crispa</name>
    <dbReference type="NCBI Taxonomy" id="2769"/>
    <lineage>
        <taxon>Eukaryota</taxon>
        <taxon>Rhodophyta</taxon>
        <taxon>Florideophyceae</taxon>
        <taxon>Rhodymeniophycidae</taxon>
        <taxon>Gigartinales</taxon>
        <taxon>Gigartinaceae</taxon>
        <taxon>Chondrus</taxon>
    </lineage>
</organism>
<name>NU1M_CHOCR</name>
<comment type="function">
    <text evidence="1">Core subunit of the mitochondrial membrane respiratory chain NADH dehydrogenase (Complex I) that is believed to belong to the minimal assembly required for catalysis. Complex I functions in the transfer of electrons from NADH to the respiratory chain. The immediate electron acceptor for the enzyme is believed to be ubiquinone (By similarity).</text>
</comment>
<comment type="catalytic activity">
    <reaction>
        <text>a ubiquinone + NADH + 5 H(+)(in) = a ubiquinol + NAD(+) + 4 H(+)(out)</text>
        <dbReference type="Rhea" id="RHEA:29091"/>
        <dbReference type="Rhea" id="RHEA-COMP:9565"/>
        <dbReference type="Rhea" id="RHEA-COMP:9566"/>
        <dbReference type="ChEBI" id="CHEBI:15378"/>
        <dbReference type="ChEBI" id="CHEBI:16389"/>
        <dbReference type="ChEBI" id="CHEBI:17976"/>
        <dbReference type="ChEBI" id="CHEBI:57540"/>
        <dbReference type="ChEBI" id="CHEBI:57945"/>
        <dbReference type="EC" id="7.1.1.2"/>
    </reaction>
</comment>
<comment type="subcellular location">
    <subcellularLocation>
        <location evidence="1">Mitochondrion inner membrane</location>
        <topology evidence="1">Multi-pass membrane protein</topology>
    </subcellularLocation>
</comment>
<comment type="similarity">
    <text evidence="3">Belongs to the complex I subunit 1 family.</text>
</comment>
<dbReference type="EC" id="7.1.1.2"/>
<dbReference type="EMBL" id="Z47547">
    <property type="protein sequence ID" value="CAA87617.1"/>
    <property type="molecule type" value="Genomic_DNA"/>
</dbReference>
<dbReference type="PIR" id="S59101">
    <property type="entry name" value="S59101"/>
</dbReference>
<dbReference type="RefSeq" id="NP_062493.1">
    <property type="nucleotide sequence ID" value="NC_001677.2"/>
</dbReference>
<dbReference type="SMR" id="P48898"/>
<dbReference type="GeneID" id="809386"/>
<dbReference type="KEGG" id="ccp:ChcroMp14"/>
<dbReference type="GO" id="GO:0005743">
    <property type="term" value="C:mitochondrial inner membrane"/>
    <property type="evidence" value="ECO:0007669"/>
    <property type="project" value="UniProtKB-SubCell"/>
</dbReference>
<dbReference type="GO" id="GO:0008137">
    <property type="term" value="F:NADH dehydrogenase (ubiquinone) activity"/>
    <property type="evidence" value="ECO:0007669"/>
    <property type="project" value="UniProtKB-EC"/>
</dbReference>
<dbReference type="GO" id="GO:0009060">
    <property type="term" value="P:aerobic respiration"/>
    <property type="evidence" value="ECO:0007669"/>
    <property type="project" value="TreeGrafter"/>
</dbReference>
<dbReference type="HAMAP" id="MF_01350">
    <property type="entry name" value="NDH1_NuoH"/>
    <property type="match status" value="1"/>
</dbReference>
<dbReference type="InterPro" id="IPR001694">
    <property type="entry name" value="NADH_UbQ_OxRdtase_su1/FPO"/>
</dbReference>
<dbReference type="InterPro" id="IPR018086">
    <property type="entry name" value="NADH_UbQ_OxRdtase_su1_CS"/>
</dbReference>
<dbReference type="NCBIfam" id="NF004741">
    <property type="entry name" value="PRK06076.1-2"/>
    <property type="match status" value="1"/>
</dbReference>
<dbReference type="NCBIfam" id="NF004745">
    <property type="entry name" value="PRK06076.1-6"/>
    <property type="match status" value="1"/>
</dbReference>
<dbReference type="PANTHER" id="PTHR11432">
    <property type="entry name" value="NADH DEHYDROGENASE SUBUNIT 1"/>
    <property type="match status" value="1"/>
</dbReference>
<dbReference type="PANTHER" id="PTHR11432:SF3">
    <property type="entry name" value="NADH-UBIQUINONE OXIDOREDUCTASE CHAIN 1"/>
    <property type="match status" value="1"/>
</dbReference>
<dbReference type="Pfam" id="PF00146">
    <property type="entry name" value="NADHdh"/>
    <property type="match status" value="1"/>
</dbReference>
<dbReference type="PROSITE" id="PS00667">
    <property type="entry name" value="COMPLEX1_ND1_1"/>
    <property type="match status" value="1"/>
</dbReference>
<dbReference type="PROSITE" id="PS00668">
    <property type="entry name" value="COMPLEX1_ND1_2"/>
    <property type="match status" value="1"/>
</dbReference>
<reference key="1">
    <citation type="journal article" date="1995" name="J. Mol. Biol.">
        <title>Complete sequence of the mitochondrial DNA of the rhodophyte Chondrus crispus (Gigartinales). Gene content and genome organization.</title>
        <authorList>
            <person name="Leblanc C."/>
            <person name="Boyen C."/>
            <person name="Richard O."/>
            <person name="Bonnard G."/>
            <person name="Grienenberger J.-M."/>
            <person name="Kloareg B."/>
        </authorList>
    </citation>
    <scope>NUCLEOTIDE SEQUENCE [GENOMIC DNA]</scope>
    <source>
        <tissue>Apices</tissue>
    </source>
</reference>
<geneLocation type="mitochondrion"/>
<feature type="chain" id="PRO_0000117368" description="NADH-ubiquinone oxidoreductase chain 1">
    <location>
        <begin position="1"/>
        <end position="326"/>
    </location>
</feature>
<feature type="transmembrane region" description="Helical" evidence="2">
    <location>
        <begin position="1"/>
        <end position="21"/>
    </location>
</feature>
<feature type="transmembrane region" description="Helical" evidence="2">
    <location>
        <begin position="41"/>
        <end position="61"/>
    </location>
</feature>
<feature type="transmembrane region" description="Helical" evidence="2">
    <location>
        <begin position="72"/>
        <end position="92"/>
    </location>
</feature>
<feature type="transmembrane region" description="Helical" evidence="2">
    <location>
        <begin position="104"/>
        <end position="124"/>
    </location>
</feature>
<feature type="transmembrane region" description="Helical" evidence="2">
    <location>
        <begin position="152"/>
        <end position="172"/>
    </location>
</feature>
<feature type="transmembrane region" description="Helical" evidence="2">
    <location>
        <begin position="177"/>
        <end position="197"/>
    </location>
</feature>
<feature type="transmembrane region" description="Helical" evidence="2">
    <location>
        <begin position="234"/>
        <end position="256"/>
    </location>
</feature>
<feature type="transmembrane region" description="Helical" evidence="2">
    <location>
        <begin position="268"/>
        <end position="288"/>
    </location>
</feature>
<feature type="transmembrane region" description="Helical" evidence="2">
    <location>
        <begin position="303"/>
        <end position="323"/>
    </location>
</feature>
<evidence type="ECO:0000250" key="1"/>
<evidence type="ECO:0000255" key="2"/>
<evidence type="ECO:0000305" key="3"/>
<sequence>MFLLSLLIKIITIILPLLVAVAYMTLAERKVMAAIQRRKGPNIVGVFGLLQPLADGLKLFVKETILPSSANIIIFILAPILTFLLALVSWCVIPLGEGMVYSDINIGVLYILAISSLGVYGIITSGWASNSKYAFLGALRSAAQMVSYEVSIGLILINVLLCSGSLNFTEIVLAQQSIWFVIPLFPIFIMFYISILAETNRAPFDLPEAEAELVAGYNVEYSAMGFALFFLGEYANMILMCSLTTILFFGGWLPPFNLTILYWISPTVWFGLKTTFLLFGFIWIRSSFPRYRYDQLMRLGWKILLPLSLAWVFLISGILLSFNWLP</sequence>